<proteinExistence type="evidence at protein level"/>
<reference key="1">
    <citation type="journal article" date="1987" name="Nucleic Acids Res.">
        <title>Nucleotide sequence of a full-length cDNA clone encoding preproparathyroid hormone from pig and rat.</title>
        <authorList>
            <person name="Schmelzer H.-J."/>
            <person name="Gross G."/>
            <person name="Widera G."/>
            <person name="Mayer H."/>
        </authorList>
    </citation>
    <scope>NUCLEOTIDE SEQUENCE [MRNA]</scope>
</reference>
<reference key="2">
    <citation type="journal article" date="1975" name="Biochemistry">
        <title>Porcine proparathyroid hormone. Identification, biosynthesis, and partial amino acid sequence.</title>
        <authorList>
            <person name="Chu L.L.H."/>
            <person name="Huang W.-Y."/>
            <person name="Littledike E.T."/>
            <person name="Hamilton J.W."/>
            <person name="Cohn D.V."/>
        </authorList>
    </citation>
    <scope>PROTEIN SEQUENCE OF 26-115</scope>
</reference>
<reference key="3">
    <citation type="journal article" date="1974" name="Biochemistry">
        <title>The amino acid sequence of porcine parathyroid hormone.</title>
        <authorList>
            <person name="Sauer R.T."/>
            <person name="Niall H.D."/>
            <person name="Hogan M.L."/>
            <person name="Keutmann H.T."/>
            <person name="O'Riordan J.L.H."/>
            <person name="Potts J.T. Jr."/>
        </authorList>
    </citation>
    <scope>PROTEIN SEQUENCE OF 32-115</scope>
    <scope>SUBCELLULAR LOCATION</scope>
</reference>
<sequence length="115" mass="12852">MMSAKDTVKVMVVMLAICFLARSDGKPIKKRSVSEIQLMHNLGKHLSSLERVEWLRKKLQDVHNFVALGASIVHRDGGSQRPRKKEDNVLVESHQKSLGEADKAAVDVLIKAKPQ</sequence>
<organism>
    <name type="scientific">Sus scrofa</name>
    <name type="common">Pig</name>
    <dbReference type="NCBI Taxonomy" id="9823"/>
    <lineage>
        <taxon>Eukaryota</taxon>
        <taxon>Metazoa</taxon>
        <taxon>Chordata</taxon>
        <taxon>Craniata</taxon>
        <taxon>Vertebrata</taxon>
        <taxon>Euteleostomi</taxon>
        <taxon>Mammalia</taxon>
        <taxon>Eutheria</taxon>
        <taxon>Laurasiatheria</taxon>
        <taxon>Artiodactyla</taxon>
        <taxon>Suina</taxon>
        <taxon>Suidae</taxon>
        <taxon>Sus</taxon>
    </lineage>
</organism>
<feature type="signal peptide" evidence="3">
    <location>
        <begin position="1"/>
        <end position="25"/>
    </location>
</feature>
<feature type="propeptide" id="PRO_0000023253" evidence="4">
    <location>
        <begin position="26"/>
        <end position="31"/>
    </location>
</feature>
<feature type="chain" id="PRO_0000023254" description="Parathyroid hormone" evidence="4">
    <location>
        <begin position="32"/>
        <end position="115"/>
    </location>
</feature>
<feature type="region of interest" description="Important for receptor binding" evidence="1">
    <location>
        <begin position="51"/>
        <end position="69"/>
    </location>
</feature>
<feature type="region of interest" description="Disordered" evidence="2">
    <location>
        <begin position="75"/>
        <end position="98"/>
    </location>
</feature>
<protein>
    <recommendedName>
        <fullName evidence="5">Parathyroid hormone</fullName>
        <shortName>PTH</shortName>
    </recommendedName>
    <alternativeName>
        <fullName>Parathyrin</fullName>
    </alternativeName>
</protein>
<name>PTHY_PIG</name>
<comment type="function">
    <text evidence="1">Parathyroid hormone elevates calcium level by dissolving the salts in bone and preventing their renal excretion. Acts by binding to its receptor, PTH1R, activating G protein-coupled receptor signaling. Stimulates [1-14C]-2-deoxy-D-glucose (2DG) transport and glycogen synthesis in osteoblastic cells.</text>
</comment>
<comment type="subunit">
    <text evidence="1">Interacts with PTH1R (via N-terminal extracellular domain).</text>
</comment>
<comment type="subcellular location">
    <subcellularLocation>
        <location evidence="4">Secreted</location>
    </subcellularLocation>
</comment>
<comment type="similarity">
    <text evidence="6">Belongs to the parathyroid hormone family.</text>
</comment>
<gene>
    <name type="primary">PTH</name>
</gene>
<dbReference type="EMBL" id="X05722">
    <property type="protein sequence ID" value="CAA29193.1"/>
    <property type="molecule type" value="mRNA"/>
</dbReference>
<dbReference type="PIR" id="B26806">
    <property type="entry name" value="PTPG"/>
</dbReference>
<dbReference type="RefSeq" id="NP_999566.1">
    <property type="nucleotide sequence ID" value="NM_214401.1"/>
</dbReference>
<dbReference type="RefSeq" id="XP_020937252.1">
    <property type="nucleotide sequence ID" value="XM_021081593.1"/>
</dbReference>
<dbReference type="FunCoup" id="P01269">
    <property type="interactions" value="61"/>
</dbReference>
<dbReference type="STRING" id="9823.ENSSSCP00000014236"/>
<dbReference type="PaxDb" id="9823-ENSSSCP00000014236"/>
<dbReference type="Ensembl" id="ENSSSCT00000014631.3">
    <property type="protein sequence ID" value="ENSSSCP00000014236.3"/>
    <property type="gene ID" value="ENSSSCG00000013394.3"/>
</dbReference>
<dbReference type="Ensembl" id="ENSSSCT00015054512.1">
    <property type="protein sequence ID" value="ENSSSCP00015021855.1"/>
    <property type="gene ID" value="ENSSSCG00015040780.1"/>
</dbReference>
<dbReference type="Ensembl" id="ENSSSCT00025075705.1">
    <property type="protein sequence ID" value="ENSSSCP00025032816.1"/>
    <property type="gene ID" value="ENSSSCG00025055306.1"/>
</dbReference>
<dbReference type="Ensembl" id="ENSSSCT00030031957.1">
    <property type="protein sequence ID" value="ENSSSCP00030014391.1"/>
    <property type="gene ID" value="ENSSSCG00030023012.1"/>
</dbReference>
<dbReference type="Ensembl" id="ENSSSCT00035080020.1">
    <property type="protein sequence ID" value="ENSSSCP00035032944.1"/>
    <property type="gene ID" value="ENSSSCG00035059707.1"/>
</dbReference>
<dbReference type="Ensembl" id="ENSSSCT00040091144.1">
    <property type="protein sequence ID" value="ENSSSCP00040040152.1"/>
    <property type="gene ID" value="ENSSSCG00040066687.1"/>
</dbReference>
<dbReference type="Ensembl" id="ENSSSCT00045034739.1">
    <property type="protein sequence ID" value="ENSSSCP00045024095.1"/>
    <property type="gene ID" value="ENSSSCG00045020365.1"/>
</dbReference>
<dbReference type="Ensembl" id="ENSSSCT00050053321.1">
    <property type="protein sequence ID" value="ENSSSCP00050022397.1"/>
    <property type="gene ID" value="ENSSSCG00050039514.1"/>
</dbReference>
<dbReference type="Ensembl" id="ENSSSCT00055053171.1">
    <property type="protein sequence ID" value="ENSSSCP00055042429.1"/>
    <property type="gene ID" value="ENSSSCG00055026883.1"/>
</dbReference>
<dbReference type="Ensembl" id="ENSSSCT00060025268.1">
    <property type="protein sequence ID" value="ENSSSCP00060010673.1"/>
    <property type="gene ID" value="ENSSSCG00060018787.1"/>
</dbReference>
<dbReference type="Ensembl" id="ENSSSCT00070019355.1">
    <property type="protein sequence ID" value="ENSSSCP00070016104.1"/>
    <property type="gene ID" value="ENSSSCG00070009958.1"/>
</dbReference>
<dbReference type="Ensembl" id="ENSSSCT00070019360.1">
    <property type="protein sequence ID" value="ENSSSCP00070016109.1"/>
    <property type="gene ID" value="ENSSSCG00070009958.1"/>
</dbReference>
<dbReference type="Ensembl" id="ENSSSCT00085036826">
    <property type="protein sequence ID" value="ENSSSCP00085025478"/>
    <property type="gene ID" value="ENSSSCG00085019373"/>
</dbReference>
<dbReference type="Ensembl" id="ENSSSCT00090047072">
    <property type="protein sequence ID" value="ENSSSCP00090029178"/>
    <property type="gene ID" value="ENSSSCG00090026648"/>
</dbReference>
<dbReference type="Ensembl" id="ENSSSCT00105043075">
    <property type="protein sequence ID" value="ENSSSCP00105029975"/>
    <property type="gene ID" value="ENSSSCG00105022654"/>
</dbReference>
<dbReference type="Ensembl" id="ENSSSCT00110043175">
    <property type="protein sequence ID" value="ENSSSCP00110030318"/>
    <property type="gene ID" value="ENSSSCG00110022341"/>
</dbReference>
<dbReference type="Ensembl" id="ENSSSCT00115005560">
    <property type="protein sequence ID" value="ENSSSCP00115005164"/>
    <property type="gene ID" value="ENSSSCG00115003314"/>
</dbReference>
<dbReference type="Ensembl" id="ENSSSCT00130048910">
    <property type="protein sequence ID" value="ENSSSCP00130034568"/>
    <property type="gene ID" value="ENSSSCG00130025235"/>
</dbReference>
<dbReference type="GeneID" id="399502"/>
<dbReference type="KEGG" id="ssc:399502"/>
<dbReference type="CTD" id="5741"/>
<dbReference type="VGNC" id="VGNC:91960">
    <property type="gene designation" value="PTH"/>
</dbReference>
<dbReference type="eggNOG" id="ENOG502SB2W">
    <property type="taxonomic scope" value="Eukaryota"/>
</dbReference>
<dbReference type="GeneTree" id="ENSGT00390000018603"/>
<dbReference type="HOGENOM" id="CLU_164143_0_0_1"/>
<dbReference type="InParanoid" id="P01269"/>
<dbReference type="OMA" id="MKLQDVH"/>
<dbReference type="OrthoDB" id="9890537at2759"/>
<dbReference type="Reactome" id="R-SSC-373080">
    <property type="pathway name" value="Class B/2 (Secretin family receptors)"/>
</dbReference>
<dbReference type="Reactome" id="R-SSC-418555">
    <property type="pathway name" value="G alpha (s) signalling events"/>
</dbReference>
<dbReference type="Proteomes" id="UP000008227">
    <property type="component" value="Chromosome 2"/>
</dbReference>
<dbReference type="Proteomes" id="UP000314985">
    <property type="component" value="Chromosome 2"/>
</dbReference>
<dbReference type="Proteomes" id="UP000694570">
    <property type="component" value="Unplaced"/>
</dbReference>
<dbReference type="Proteomes" id="UP000694571">
    <property type="component" value="Unplaced"/>
</dbReference>
<dbReference type="Proteomes" id="UP000694720">
    <property type="component" value="Unplaced"/>
</dbReference>
<dbReference type="Proteomes" id="UP000694722">
    <property type="component" value="Unplaced"/>
</dbReference>
<dbReference type="Proteomes" id="UP000694723">
    <property type="component" value="Unplaced"/>
</dbReference>
<dbReference type="Proteomes" id="UP000694724">
    <property type="component" value="Unplaced"/>
</dbReference>
<dbReference type="Proteomes" id="UP000694725">
    <property type="component" value="Unplaced"/>
</dbReference>
<dbReference type="Proteomes" id="UP000694726">
    <property type="component" value="Unplaced"/>
</dbReference>
<dbReference type="Proteomes" id="UP000694727">
    <property type="component" value="Unplaced"/>
</dbReference>
<dbReference type="Proteomes" id="UP000694728">
    <property type="component" value="Unplaced"/>
</dbReference>
<dbReference type="Bgee" id="ENSSSCG00000013394">
    <property type="expression patterns" value="Expressed in epididymis and 21 other cell types or tissues"/>
</dbReference>
<dbReference type="GO" id="GO:0005615">
    <property type="term" value="C:extracellular space"/>
    <property type="evidence" value="ECO:0000318"/>
    <property type="project" value="GO_Central"/>
</dbReference>
<dbReference type="GO" id="GO:0005179">
    <property type="term" value="F:hormone activity"/>
    <property type="evidence" value="ECO:0000318"/>
    <property type="project" value="GO_Central"/>
</dbReference>
<dbReference type="GO" id="GO:0031856">
    <property type="term" value="F:parathyroid hormone receptor binding"/>
    <property type="evidence" value="ECO:0000318"/>
    <property type="project" value="GO_Central"/>
</dbReference>
<dbReference type="GO" id="GO:0051428">
    <property type="term" value="F:peptide hormone receptor binding"/>
    <property type="evidence" value="ECO:0000250"/>
    <property type="project" value="UniProtKB"/>
</dbReference>
<dbReference type="GO" id="GO:0031857">
    <property type="term" value="F:type 1 parathyroid hormone receptor binding"/>
    <property type="evidence" value="ECO:0007669"/>
    <property type="project" value="Ensembl"/>
</dbReference>
<dbReference type="GO" id="GO:0007189">
    <property type="term" value="P:adenylate cyclase-activating G protein-coupled receptor signaling pathway"/>
    <property type="evidence" value="ECO:0007669"/>
    <property type="project" value="Ensembl"/>
</dbReference>
<dbReference type="GO" id="GO:0030282">
    <property type="term" value="P:bone mineralization"/>
    <property type="evidence" value="ECO:0007669"/>
    <property type="project" value="Ensembl"/>
</dbReference>
<dbReference type="GO" id="GO:0007267">
    <property type="term" value="P:cell-cell signaling"/>
    <property type="evidence" value="ECO:0000318"/>
    <property type="project" value="GO_Central"/>
</dbReference>
<dbReference type="GO" id="GO:0048873">
    <property type="term" value="P:homeostasis of number of cells within a tissue"/>
    <property type="evidence" value="ECO:0007669"/>
    <property type="project" value="Ensembl"/>
</dbReference>
<dbReference type="GO" id="GO:0006874">
    <property type="term" value="P:intracellular calcium ion homeostasis"/>
    <property type="evidence" value="ECO:0007669"/>
    <property type="project" value="Ensembl"/>
</dbReference>
<dbReference type="GO" id="GO:0010960">
    <property type="term" value="P:magnesium ion homeostasis"/>
    <property type="evidence" value="ECO:0007669"/>
    <property type="project" value="Ensembl"/>
</dbReference>
<dbReference type="GO" id="GO:0071866">
    <property type="term" value="P:negative regulation of apoptotic process in bone marrow cell"/>
    <property type="evidence" value="ECO:0007669"/>
    <property type="project" value="Ensembl"/>
</dbReference>
<dbReference type="GO" id="GO:0010629">
    <property type="term" value="P:negative regulation of gene expression"/>
    <property type="evidence" value="ECO:0007669"/>
    <property type="project" value="Ensembl"/>
</dbReference>
<dbReference type="GO" id="GO:0055062">
    <property type="term" value="P:phosphate ion homeostasis"/>
    <property type="evidence" value="ECO:0007669"/>
    <property type="project" value="Ensembl"/>
</dbReference>
<dbReference type="GO" id="GO:0030501">
    <property type="term" value="P:positive regulation of bone mineralization"/>
    <property type="evidence" value="ECO:0007669"/>
    <property type="project" value="Ensembl"/>
</dbReference>
<dbReference type="GO" id="GO:0071864">
    <property type="term" value="P:positive regulation of cell proliferation in bone marrow"/>
    <property type="evidence" value="ECO:0007669"/>
    <property type="project" value="Ensembl"/>
</dbReference>
<dbReference type="GO" id="GO:0046326">
    <property type="term" value="P:positive regulation of D-glucose import"/>
    <property type="evidence" value="ECO:0000250"/>
    <property type="project" value="UniProtKB"/>
</dbReference>
<dbReference type="GO" id="GO:0045725">
    <property type="term" value="P:positive regulation of glycogen biosynthetic process"/>
    <property type="evidence" value="ECO:0000250"/>
    <property type="project" value="UniProtKB"/>
</dbReference>
<dbReference type="GO" id="GO:0060732">
    <property type="term" value="P:positive regulation of inositol phosphate biosynthetic process"/>
    <property type="evidence" value="ECO:0007669"/>
    <property type="project" value="Ensembl"/>
</dbReference>
<dbReference type="GO" id="GO:0090290">
    <property type="term" value="P:positive regulation of osteoclast proliferation"/>
    <property type="evidence" value="ECO:0007669"/>
    <property type="project" value="Ensembl"/>
</dbReference>
<dbReference type="GO" id="GO:0009967">
    <property type="term" value="P:positive regulation of signal transduction"/>
    <property type="evidence" value="ECO:0007669"/>
    <property type="project" value="Ensembl"/>
</dbReference>
<dbReference type="GO" id="GO:0045944">
    <property type="term" value="P:positive regulation of transcription by RNA polymerase II"/>
    <property type="evidence" value="ECO:0007669"/>
    <property type="project" value="Ensembl"/>
</dbReference>
<dbReference type="GO" id="GO:0006366">
    <property type="term" value="P:transcription by RNA polymerase II"/>
    <property type="evidence" value="ECO:0007669"/>
    <property type="project" value="Ensembl"/>
</dbReference>
<dbReference type="InterPro" id="IPR003625">
    <property type="entry name" value="PTH"/>
</dbReference>
<dbReference type="InterPro" id="IPR001415">
    <property type="entry name" value="PTH/PTH-rel"/>
</dbReference>
<dbReference type="PANTHER" id="PTHR10541">
    <property type="entry name" value="PARATHYROID HORMONE"/>
    <property type="match status" value="1"/>
</dbReference>
<dbReference type="PANTHER" id="PTHR10541:SF2">
    <property type="entry name" value="PARATHYROID HORMONE"/>
    <property type="match status" value="1"/>
</dbReference>
<dbReference type="Pfam" id="PF01279">
    <property type="entry name" value="Parathyroid"/>
    <property type="match status" value="1"/>
</dbReference>
<dbReference type="PIRSF" id="PIRSF001832">
    <property type="entry name" value="PTH"/>
    <property type="match status" value="1"/>
</dbReference>
<dbReference type="SMART" id="SM00087">
    <property type="entry name" value="PTH"/>
    <property type="match status" value="1"/>
</dbReference>
<dbReference type="PROSITE" id="PS00335">
    <property type="entry name" value="PARATHYROID"/>
    <property type="match status" value="1"/>
</dbReference>
<evidence type="ECO:0000250" key="1">
    <source>
        <dbReference type="UniProtKB" id="P01270"/>
    </source>
</evidence>
<evidence type="ECO:0000256" key="2">
    <source>
        <dbReference type="SAM" id="MobiDB-lite"/>
    </source>
</evidence>
<evidence type="ECO:0000269" key="3">
    <source>
    </source>
</evidence>
<evidence type="ECO:0000269" key="4">
    <source>
    </source>
</evidence>
<evidence type="ECO:0000303" key="5">
    <source>
    </source>
</evidence>
<evidence type="ECO:0000305" key="6"/>
<accession>P01269</accession>
<keyword id="KW-0165">Cleavage on pair of basic residues</keyword>
<keyword id="KW-0903">Direct protein sequencing</keyword>
<keyword id="KW-0372">Hormone</keyword>
<keyword id="KW-1185">Reference proteome</keyword>
<keyword id="KW-0964">Secreted</keyword>
<keyword id="KW-0732">Signal</keyword>